<reference key="1">
    <citation type="journal article" date="1999" name="J. Bacteriol.">
        <title>The HPr(Ser) kinase of Streptococcus salivarius: purification, properties, and cloning of the hprK gene.</title>
        <authorList>
            <person name="Brochu D."/>
            <person name="Vadeboncoeur C."/>
        </authorList>
    </citation>
    <scope>NUCLEOTIDE SEQUENCE [GENOMIC DNA]</scope>
    <scope>PARTIAL PROTEIN SEQUENCE</scope>
    <scope>CHARACTERIZATION</scope>
    <source>
        <strain>ATCC 25975</strain>
    </source>
</reference>
<reference key="2">
    <citation type="journal article" date="2003" name="FEMS Microbiol. Lett.">
        <title>The HPr(Ser) kinase of Streptococcus salivarius: a hexameric bifunctional enzyme controlled by glycolytic intermediates and inorganic phosphate.</title>
        <authorList>
            <person name="Frey N."/>
            <person name="Nessler S."/>
            <person name="Fieulaine S."/>
            <person name="Vaillancourt K."/>
            <person name="Frenette M."/>
            <person name="Vadeboncoeur C."/>
        </authorList>
    </citation>
    <scope>CHARACTERIZATION</scope>
    <scope>ACTIVITY REGULATION</scope>
    <scope>SUBUNIT</scope>
    <source>
        <strain>ATCC 25975</strain>
    </source>
</reference>
<feature type="chain" id="PRO_0000059002" description="HPr kinase/phosphorylase">
    <location>
        <begin position="1"/>
        <end position="309"/>
    </location>
</feature>
<feature type="region of interest" description="Important for the catalytic mechanism of both phosphorylation and dephosphorylation" evidence="1">
    <location>
        <begin position="201"/>
        <end position="210"/>
    </location>
</feature>
<feature type="region of interest" description="Important for the catalytic mechanism of dephosphorylation" evidence="1">
    <location>
        <begin position="264"/>
        <end position="269"/>
    </location>
</feature>
<feature type="active site" evidence="1">
    <location>
        <position position="138"/>
    </location>
</feature>
<feature type="active site" evidence="1">
    <location>
        <position position="159"/>
    </location>
</feature>
<feature type="active site" description="Proton acceptor; for phosphorylation activity. Proton donor; for dephosphorylation activity" evidence="1">
    <location>
        <position position="177"/>
    </location>
</feature>
<feature type="active site" evidence="1">
    <location>
        <position position="243"/>
    </location>
</feature>
<feature type="binding site" evidence="1">
    <location>
        <begin position="153"/>
        <end position="160"/>
    </location>
    <ligand>
        <name>ATP</name>
        <dbReference type="ChEBI" id="CHEBI:30616"/>
    </ligand>
</feature>
<feature type="binding site" evidence="2">
    <location>
        <position position="160"/>
    </location>
    <ligand>
        <name>Mg(2+)</name>
        <dbReference type="ChEBI" id="CHEBI:18420"/>
    </ligand>
</feature>
<feature type="binding site" evidence="2">
    <location>
        <position position="202"/>
    </location>
    <ligand>
        <name>Mg(2+)</name>
        <dbReference type="ChEBI" id="CHEBI:18420"/>
    </ligand>
</feature>
<comment type="function">
    <text>Catalyzes the ATP- as well as probably the pyrophosphate-dependent phosphorylation of 'Ser-46' in HPr, a phosphocarrier protein of the phosphoenolpyruvate-dependent sugar phosphotransferase system (PTS). HprK/P also catalyzes the pyrophosphate-producing, inorganic phosphate-dependent dephosphorylation (phosphorolysis) of seryl-phosphorylated HPr (P-Ser-HPr). The two antagonistic activities of HprK/P are regulated by several intracellular metabolites, which change their concentration in response to the absence or presence of rapidly metabolisable carbon sources (glucose, fructose, etc.) in the growth medium. Therefore, by controlling the phosphorylation state of HPr, the bifunctional HPr kinase/phosphorylase is a sensor enzyme that plays a major role in the regulation of carbon metabolism and sugar transport: it probably mediates carbon catabolite repression (CCR), and regulates PTS-catalyzed carbohydrate uptake and inducer exclusion.</text>
</comment>
<comment type="catalytic activity">
    <reaction>
        <text>[HPr protein]-L-serine + ATP = [HPr protein]-O-phospho-L-serine + ADP + H(+)</text>
        <dbReference type="Rhea" id="RHEA:46600"/>
        <dbReference type="Rhea" id="RHEA-COMP:11602"/>
        <dbReference type="Rhea" id="RHEA-COMP:11603"/>
        <dbReference type="ChEBI" id="CHEBI:15378"/>
        <dbReference type="ChEBI" id="CHEBI:29999"/>
        <dbReference type="ChEBI" id="CHEBI:30616"/>
        <dbReference type="ChEBI" id="CHEBI:83421"/>
        <dbReference type="ChEBI" id="CHEBI:456216"/>
    </reaction>
</comment>
<comment type="catalytic activity">
    <reaction>
        <text>[HPr protein]-O-phospho-L-serine + phosphate + H(+) = [HPr protein]-L-serine + diphosphate</text>
        <dbReference type="Rhea" id="RHEA:46604"/>
        <dbReference type="Rhea" id="RHEA-COMP:11602"/>
        <dbReference type="Rhea" id="RHEA-COMP:11603"/>
        <dbReference type="ChEBI" id="CHEBI:15378"/>
        <dbReference type="ChEBI" id="CHEBI:29999"/>
        <dbReference type="ChEBI" id="CHEBI:33019"/>
        <dbReference type="ChEBI" id="CHEBI:43474"/>
        <dbReference type="ChEBI" id="CHEBI:83421"/>
    </reaction>
</comment>
<comment type="cofactor">
    <cofactor>
        <name>Mg(2+)</name>
        <dbReference type="ChEBI" id="CHEBI:18420"/>
    </cofactor>
</comment>
<comment type="activity regulation">
    <text evidence="3">Kinase activity is slightly activated by fructose 1,6-bisphosphate (FBP) at low ATP concentrations, and is inhibited by inorganic phosphate (Pi). Moreover, FBP, phosphoenolpyruvate and 2-phosphoglycerate, but not fructose 1-P, fructose 6-P, and ribulose 1,5-bisphosphate protect kinase activity against inhibition by Pi. Dephosphorylation of P-Ser-HPr by S.salivarius HPrK/P is strictly dependent on the presence of Pi, and is inhibited by FBP. FBP seems to modulate HPrK/P activities by enhancing affinity of the active site for ATP and, conversely, lowering the affinity for Pi.</text>
</comment>
<comment type="biophysicochemical properties">
    <kinetics>
        <KM>31 uM for HPr</KM>
        <KM>5 uM for HPr(Ser-P)</KM>
        <KM>1 mM for ATP</KM>
    </kinetics>
    <phDependence>
        <text>Optimum pH is 7.5. Active from pH 5.5 to 9.5. At pH 5.5, exhibits less than 15% of its optimal activity.</text>
    </phDependence>
</comment>
<comment type="subunit">
    <text evidence="3">Homohexamer.</text>
</comment>
<comment type="domain">
    <text evidence="1">The Walker A ATP-binding motif also binds Pi and PPi.</text>
</comment>
<comment type="miscellaneous">
    <text evidence="1">Both phosphorylation and phosphorolysis are carried out by the same active site and suggest a common mechanism for both reactions.</text>
</comment>
<comment type="similarity">
    <text evidence="4">Belongs to the HPrK/P family.</text>
</comment>
<gene>
    <name type="primary">hprK</name>
</gene>
<keyword id="KW-0021">Allosteric enzyme</keyword>
<keyword id="KW-0067">ATP-binding</keyword>
<keyword id="KW-0119">Carbohydrate metabolism</keyword>
<keyword id="KW-0903">Direct protein sequencing</keyword>
<keyword id="KW-0418">Kinase</keyword>
<keyword id="KW-0460">Magnesium</keyword>
<keyword id="KW-0479">Metal-binding</keyword>
<keyword id="KW-0511">Multifunctional enzyme</keyword>
<keyword id="KW-0547">Nucleotide-binding</keyword>
<keyword id="KW-0723">Serine/threonine-protein kinase</keyword>
<keyword id="KW-0808">Transferase</keyword>
<sequence length="309" mass="34440">MTVTVKMLVDKLKLKVIYGNEKLLSKPITTADISRPGLEMTGYFDFYSPERIQLVGMKEWSYLKTLTDHNRYSVFSNMFKEETPAVIVARGLDIPEEMYRAAKENGVAVLQGRNGTSSLSGDMSWYLNAQLAERTSVHGVLVDIYGMGVLIQGDSGIGKSETGLELVKRGHRLVADDRVDVYAKDEETLWGEPAEILHHLLEIRGVGIIDVMSLYGASAVRNSSQVQLAIYLENFEDGKVFDRLGNGNEEIELQGVKIPRVRIPVKTGRNVSVVIEAAAMNYRAKQMGFDATKTFEERLTNLISKNGED</sequence>
<protein>
    <recommendedName>
        <fullName>HPr kinase/phosphorylase</fullName>
        <shortName>HPrK/P</shortName>
        <ecNumber>2.7.11.-</ecNumber>
        <ecNumber>2.7.4.-</ecNumber>
    </recommendedName>
    <alternativeName>
        <fullName>HPr(Ser) kinase/phosphorylase</fullName>
    </alternativeName>
</protein>
<dbReference type="EC" id="2.7.11.-"/>
<dbReference type="EC" id="2.7.4.-"/>
<dbReference type="EMBL" id="AF069743">
    <property type="protein sequence ID" value="AAD12781.1"/>
    <property type="molecule type" value="Genomic_DNA"/>
</dbReference>
<dbReference type="RefSeq" id="WP_084871434.1">
    <property type="nucleotide sequence ID" value="NZ_CP015283.1"/>
</dbReference>
<dbReference type="SMR" id="Q9ZA98"/>
<dbReference type="STRING" id="1304.HMPREF3219_0201753"/>
<dbReference type="SABIO-RK" id="Q9ZA98"/>
<dbReference type="GO" id="GO:0005524">
    <property type="term" value="F:ATP binding"/>
    <property type="evidence" value="ECO:0007669"/>
    <property type="project" value="UniProtKB-UniRule"/>
</dbReference>
<dbReference type="GO" id="GO:0000287">
    <property type="term" value="F:magnesium ion binding"/>
    <property type="evidence" value="ECO:0007669"/>
    <property type="project" value="UniProtKB-UniRule"/>
</dbReference>
<dbReference type="GO" id="GO:0000155">
    <property type="term" value="F:phosphorelay sensor kinase activity"/>
    <property type="evidence" value="ECO:0007669"/>
    <property type="project" value="InterPro"/>
</dbReference>
<dbReference type="GO" id="GO:0004674">
    <property type="term" value="F:protein serine/threonine kinase activity"/>
    <property type="evidence" value="ECO:0007669"/>
    <property type="project" value="UniProtKB-KW"/>
</dbReference>
<dbReference type="GO" id="GO:0004712">
    <property type="term" value="F:protein serine/threonine/tyrosine kinase activity"/>
    <property type="evidence" value="ECO:0007669"/>
    <property type="project" value="UniProtKB-UniRule"/>
</dbReference>
<dbReference type="GO" id="GO:0006109">
    <property type="term" value="P:regulation of carbohydrate metabolic process"/>
    <property type="evidence" value="ECO:0007669"/>
    <property type="project" value="UniProtKB-UniRule"/>
</dbReference>
<dbReference type="CDD" id="cd01918">
    <property type="entry name" value="HprK_C"/>
    <property type="match status" value="1"/>
</dbReference>
<dbReference type="FunFam" id="3.40.50.300:FF:000174">
    <property type="entry name" value="HPr kinase/phosphorylase"/>
    <property type="match status" value="1"/>
</dbReference>
<dbReference type="Gene3D" id="3.40.1390.20">
    <property type="entry name" value="HprK N-terminal domain-like"/>
    <property type="match status" value="1"/>
</dbReference>
<dbReference type="Gene3D" id="3.40.50.300">
    <property type="entry name" value="P-loop containing nucleotide triphosphate hydrolases"/>
    <property type="match status" value="1"/>
</dbReference>
<dbReference type="HAMAP" id="MF_01249">
    <property type="entry name" value="HPr_kinase"/>
    <property type="match status" value="1"/>
</dbReference>
<dbReference type="InterPro" id="IPR003755">
    <property type="entry name" value="HPr(Ser)_kin/Pase"/>
</dbReference>
<dbReference type="InterPro" id="IPR011104">
    <property type="entry name" value="Hpr_kin/Pase_C"/>
</dbReference>
<dbReference type="InterPro" id="IPR011126">
    <property type="entry name" value="Hpr_kin/Pase_Hpr_N"/>
</dbReference>
<dbReference type="InterPro" id="IPR027417">
    <property type="entry name" value="P-loop_NTPase"/>
</dbReference>
<dbReference type="InterPro" id="IPR028979">
    <property type="entry name" value="Ser_kin/Pase_Hpr-like_N_sf"/>
</dbReference>
<dbReference type="NCBIfam" id="TIGR00679">
    <property type="entry name" value="hpr-ser"/>
    <property type="match status" value="1"/>
</dbReference>
<dbReference type="PANTHER" id="PTHR30305:SF1">
    <property type="entry name" value="HPR KINASE_PHOSPHORYLASE"/>
    <property type="match status" value="1"/>
</dbReference>
<dbReference type="PANTHER" id="PTHR30305">
    <property type="entry name" value="PROTEIN YJDM-RELATED"/>
    <property type="match status" value="1"/>
</dbReference>
<dbReference type="Pfam" id="PF07475">
    <property type="entry name" value="Hpr_kinase_C"/>
    <property type="match status" value="1"/>
</dbReference>
<dbReference type="Pfam" id="PF02603">
    <property type="entry name" value="Hpr_kinase_N"/>
    <property type="match status" value="1"/>
</dbReference>
<dbReference type="SUPFAM" id="SSF75138">
    <property type="entry name" value="HprK N-terminal domain-like"/>
    <property type="match status" value="1"/>
</dbReference>
<dbReference type="SUPFAM" id="SSF53795">
    <property type="entry name" value="PEP carboxykinase-like"/>
    <property type="match status" value="1"/>
</dbReference>
<name>HPRK_STRSL</name>
<evidence type="ECO:0000250" key="1"/>
<evidence type="ECO:0000255" key="2"/>
<evidence type="ECO:0000269" key="3">
    <source>
    </source>
</evidence>
<evidence type="ECO:0000305" key="4"/>
<organism>
    <name type="scientific">Streptococcus salivarius</name>
    <dbReference type="NCBI Taxonomy" id="1304"/>
    <lineage>
        <taxon>Bacteria</taxon>
        <taxon>Bacillati</taxon>
        <taxon>Bacillota</taxon>
        <taxon>Bacilli</taxon>
        <taxon>Lactobacillales</taxon>
        <taxon>Streptococcaceae</taxon>
        <taxon>Streptococcus</taxon>
    </lineage>
</organism>
<proteinExistence type="evidence at protein level"/>
<accession>Q9ZA98</accession>